<proteinExistence type="evidence at protein level"/>
<gene>
    <name type="primary">SODCP</name>
</gene>
<feature type="transit peptide" description="Chloroplast" evidence="2">
    <location>
        <begin position="1"/>
        <end position="68"/>
    </location>
</feature>
<feature type="chain" id="PRO_0000032852" description="Superoxide dismutase [Cu-Zn], chloroplastic">
    <location>
        <begin position="69"/>
        <end position="222"/>
    </location>
</feature>
<feature type="binding site" evidence="1">
    <location>
        <position position="114"/>
    </location>
    <ligand>
        <name>Cu cation</name>
        <dbReference type="ChEBI" id="CHEBI:23378"/>
        <note>catalytic</note>
    </ligand>
</feature>
<feature type="binding site" evidence="1">
    <location>
        <position position="116"/>
    </location>
    <ligand>
        <name>Cu cation</name>
        <dbReference type="ChEBI" id="CHEBI:23378"/>
        <note>catalytic</note>
    </ligand>
</feature>
<feature type="binding site" evidence="1">
    <location>
        <position position="131"/>
    </location>
    <ligand>
        <name>Cu cation</name>
        <dbReference type="ChEBI" id="CHEBI:23378"/>
        <note>catalytic</note>
    </ligand>
</feature>
<feature type="binding site" evidence="1">
    <location>
        <position position="131"/>
    </location>
    <ligand>
        <name>Zn(2+)</name>
        <dbReference type="ChEBI" id="CHEBI:29105"/>
        <note>structural</note>
    </ligand>
</feature>
<feature type="binding site" evidence="1">
    <location>
        <position position="139"/>
    </location>
    <ligand>
        <name>Zn(2+)</name>
        <dbReference type="ChEBI" id="CHEBI:29105"/>
        <note>structural</note>
    </ligand>
</feature>
<feature type="binding site" evidence="1">
    <location>
        <position position="148"/>
    </location>
    <ligand>
        <name>Zn(2+)</name>
        <dbReference type="ChEBI" id="CHEBI:29105"/>
        <note>structural</note>
    </ligand>
</feature>
<feature type="binding site" evidence="1">
    <location>
        <position position="151"/>
    </location>
    <ligand>
        <name>Zn(2+)</name>
        <dbReference type="ChEBI" id="CHEBI:29105"/>
        <note>structural</note>
    </ligand>
</feature>
<feature type="binding site" evidence="1">
    <location>
        <position position="188"/>
    </location>
    <ligand>
        <name>Cu cation</name>
        <dbReference type="ChEBI" id="CHEBI:23378"/>
        <note>catalytic</note>
    </ligand>
</feature>
<feature type="disulfide bond">
    <location>
        <begin position="125"/>
        <end position="214"/>
    </location>
</feature>
<feature type="strand" evidence="4">
    <location>
        <begin position="70"/>
        <end position="76"/>
    </location>
</feature>
<feature type="strand" evidence="4">
    <location>
        <begin position="80"/>
        <end position="82"/>
    </location>
</feature>
<feature type="strand" evidence="4">
    <location>
        <begin position="86"/>
        <end position="92"/>
    </location>
</feature>
<feature type="strand" evidence="4">
    <location>
        <begin position="97"/>
        <end position="105"/>
    </location>
</feature>
<feature type="strand" evidence="4">
    <location>
        <begin position="108"/>
        <end position="110"/>
    </location>
</feature>
<feature type="strand" evidence="4">
    <location>
        <begin position="113"/>
        <end position="117"/>
    </location>
</feature>
<feature type="helix" evidence="4">
    <location>
        <begin position="124"/>
        <end position="128"/>
    </location>
</feature>
<feature type="strand" evidence="4">
    <location>
        <begin position="149"/>
        <end position="151"/>
    </location>
</feature>
<feature type="strand" evidence="4">
    <location>
        <begin position="161"/>
        <end position="171"/>
    </location>
</feature>
<feature type="strand" evidence="4">
    <location>
        <begin position="174"/>
        <end position="176"/>
    </location>
</feature>
<feature type="strand" evidence="4">
    <location>
        <begin position="184"/>
        <end position="190"/>
    </location>
</feature>
<feature type="strand" evidence="4">
    <location>
        <begin position="199"/>
        <end position="201"/>
    </location>
</feature>
<feature type="turn" evidence="4">
    <location>
        <begin position="202"/>
        <end position="205"/>
    </location>
</feature>
<feature type="strand" evidence="4">
    <location>
        <begin position="211"/>
        <end position="216"/>
    </location>
</feature>
<feature type="strand" evidence="4">
    <location>
        <begin position="218"/>
        <end position="220"/>
    </location>
</feature>
<name>SODCP_SPIOL</name>
<accession>P07505</accession>
<keyword id="KW-0002">3D-structure</keyword>
<keyword id="KW-0049">Antioxidant</keyword>
<keyword id="KW-0150">Chloroplast</keyword>
<keyword id="KW-0186">Copper</keyword>
<keyword id="KW-0903">Direct protein sequencing</keyword>
<keyword id="KW-1015">Disulfide bond</keyword>
<keyword id="KW-0479">Metal-binding</keyword>
<keyword id="KW-0560">Oxidoreductase</keyword>
<keyword id="KW-0934">Plastid</keyword>
<keyword id="KW-1185">Reference proteome</keyword>
<keyword id="KW-0809">Transit peptide</keyword>
<keyword id="KW-0862">Zinc</keyword>
<sequence>MAAHTILASAPSHTTFSLISPFSSTPTNALSSSLQSSSFNGLSFKLSPTTQSLSLSTSAASKPLTIVAATKKAVAVLKGTSNVEGVVTLTQEDDGPTTVNVRISGLAPGKHGFHLHEFGDTTNGCMSTGPHFNPDKKTHGAPEDEVRHAGDLGNIVANTDGVAEATIVDNQIPLTGPNSVVGRALVVHELEDDLGKGGHELSPTTGNAGGRLACGVVGLTPV</sequence>
<comment type="function">
    <text>Destroys radicals which are normally produced within the cells and which are toxic to biological systems.</text>
</comment>
<comment type="catalytic activity">
    <reaction>
        <text>2 superoxide + 2 H(+) = H2O2 + O2</text>
        <dbReference type="Rhea" id="RHEA:20696"/>
        <dbReference type="ChEBI" id="CHEBI:15378"/>
        <dbReference type="ChEBI" id="CHEBI:15379"/>
        <dbReference type="ChEBI" id="CHEBI:16240"/>
        <dbReference type="ChEBI" id="CHEBI:18421"/>
        <dbReference type="EC" id="1.15.1.1"/>
    </reaction>
</comment>
<comment type="cofactor">
    <cofactor evidence="1">
        <name>Cu cation</name>
        <dbReference type="ChEBI" id="CHEBI:23378"/>
    </cofactor>
    <text evidence="1">Binds 1 copper ion per subunit.</text>
</comment>
<comment type="cofactor">
    <cofactor evidence="1">
        <name>Zn(2+)</name>
        <dbReference type="ChEBI" id="CHEBI:29105"/>
    </cofactor>
    <text evidence="1">Binds 1 zinc ion per subunit.</text>
</comment>
<comment type="subunit">
    <text evidence="1">Homotetramer.</text>
</comment>
<comment type="subcellular location">
    <subcellularLocation>
        <location>Plastid</location>
        <location>Chloroplast</location>
    </subcellularLocation>
</comment>
<comment type="similarity">
    <text evidence="3">Belongs to the Cu-Zn superoxide dismutase family.</text>
</comment>
<protein>
    <recommendedName>
        <fullName>Superoxide dismutase [Cu-Zn], chloroplastic</fullName>
        <ecNumber>1.15.1.1</ecNumber>
    </recommendedName>
</protein>
<evidence type="ECO:0000269" key="1">
    <source>
    </source>
</evidence>
<evidence type="ECO:0000269" key="2">
    <source>
    </source>
</evidence>
<evidence type="ECO:0000305" key="3"/>
<evidence type="ECO:0007829" key="4">
    <source>
        <dbReference type="PDB" id="1SRD"/>
    </source>
</evidence>
<reference key="1">
    <citation type="journal article" date="1993" name="Plant Cell Physiol.">
        <title>cDNA cloning and expression of the plastidic copper/zinc-superoxide dismutase from spinach (Spinacia oleracea L.) leaves.</title>
        <authorList>
            <person name="Sakamoto A."/>
            <person name="Ohsuga H."/>
            <person name="Wakaura M."/>
            <person name="Mitsukawa N."/>
            <person name="Hibino T."/>
            <person name="Masumura T."/>
            <person name="Sasaki Y."/>
            <person name="Tanaka K."/>
        </authorList>
    </citation>
    <scope>NUCLEOTIDE SEQUENCE [MRNA]</scope>
    <source>
        <tissue>Leaf</tissue>
    </source>
</reference>
<reference key="2">
    <citation type="journal article" date="1986" name="J. Biochem.">
        <title>Amino acid sequence of copper,zinc-superoxide dismutase from spinach leaves.</title>
        <authorList>
            <person name="Kitagawa Y."/>
            <person name="Tsunasawa S."/>
            <person name="Tanaka N."/>
            <person name="Katsube Y."/>
            <person name="Sakiyama F."/>
            <person name="Asada K."/>
        </authorList>
    </citation>
    <scope>PROTEIN SEQUENCE OF 69-222</scope>
</reference>
<reference key="3">
    <citation type="journal article" date="1991" name="J. Biochem.">
        <title>Three-dimensional structure of Cu,Zn-superoxide dismutase from spinach at 2.0-A resolution.</title>
        <authorList>
            <person name="Kitagawa Y."/>
            <person name="Tanaka N."/>
            <person name="Hata Y."/>
            <person name="Kusunoki M."/>
            <person name="Lee G.-P."/>
            <person name="Katsube Y."/>
            <person name="Asada K."/>
            <person name="Aibara S."/>
            <person name="Morita Y."/>
        </authorList>
    </citation>
    <scope>X-RAY CRYSTALLOGRAPHY (2.0 ANGSTROMS) IN COMPLEX WITH COPPER AND ZINC IONS</scope>
</reference>
<dbReference type="EC" id="1.15.1.1"/>
<dbReference type="EMBL" id="D10244">
    <property type="protein sequence ID" value="BAA01088.1"/>
    <property type="molecule type" value="mRNA"/>
</dbReference>
<dbReference type="PIR" id="JQ0940">
    <property type="entry name" value="DSSPCZ"/>
</dbReference>
<dbReference type="PDB" id="1SRD">
    <property type="method" value="X-ray"/>
    <property type="resolution" value="2.00 A"/>
    <property type="chains" value="A/B/C/D=69-222"/>
</dbReference>
<dbReference type="PDBsum" id="1SRD"/>
<dbReference type="SMR" id="P07505"/>
<dbReference type="EvolutionaryTrace" id="P07505"/>
<dbReference type="Proteomes" id="UP001155700">
    <property type="component" value="Unplaced"/>
</dbReference>
<dbReference type="GO" id="GO:0009507">
    <property type="term" value="C:chloroplast"/>
    <property type="evidence" value="ECO:0000314"/>
    <property type="project" value="CACAO"/>
</dbReference>
<dbReference type="GO" id="GO:0005507">
    <property type="term" value="F:copper ion binding"/>
    <property type="evidence" value="ECO:0000318"/>
    <property type="project" value="GO_Central"/>
</dbReference>
<dbReference type="GO" id="GO:0004784">
    <property type="term" value="F:superoxide dismutase activity"/>
    <property type="evidence" value="ECO:0000318"/>
    <property type="project" value="GO_Central"/>
</dbReference>
<dbReference type="GO" id="GO:0019430">
    <property type="term" value="P:removal of superoxide radicals"/>
    <property type="evidence" value="ECO:0000318"/>
    <property type="project" value="GO_Central"/>
</dbReference>
<dbReference type="CDD" id="cd00305">
    <property type="entry name" value="Cu-Zn_Superoxide_Dismutase"/>
    <property type="match status" value="1"/>
</dbReference>
<dbReference type="FunFam" id="2.60.40.200:FF:000003">
    <property type="entry name" value="Superoxide dismutase [Cu-Zn], chloroplastic"/>
    <property type="match status" value="1"/>
</dbReference>
<dbReference type="Gene3D" id="2.60.40.200">
    <property type="entry name" value="Superoxide dismutase, copper/zinc binding domain"/>
    <property type="match status" value="1"/>
</dbReference>
<dbReference type="InterPro" id="IPR036423">
    <property type="entry name" value="SOD-like_Cu/Zn_dom_sf"/>
</dbReference>
<dbReference type="InterPro" id="IPR024134">
    <property type="entry name" value="SOD_Cu/Zn_/chaperone"/>
</dbReference>
<dbReference type="InterPro" id="IPR018152">
    <property type="entry name" value="SOD_Cu/Zn_BS"/>
</dbReference>
<dbReference type="InterPro" id="IPR001424">
    <property type="entry name" value="SOD_Cu_Zn_dom"/>
</dbReference>
<dbReference type="PANTHER" id="PTHR10003">
    <property type="entry name" value="SUPEROXIDE DISMUTASE CU-ZN -RELATED"/>
    <property type="match status" value="1"/>
</dbReference>
<dbReference type="Pfam" id="PF00080">
    <property type="entry name" value="Sod_Cu"/>
    <property type="match status" value="1"/>
</dbReference>
<dbReference type="PRINTS" id="PR00068">
    <property type="entry name" value="CUZNDISMTASE"/>
</dbReference>
<dbReference type="SUPFAM" id="SSF49329">
    <property type="entry name" value="Cu,Zn superoxide dismutase-like"/>
    <property type="match status" value="1"/>
</dbReference>
<dbReference type="PROSITE" id="PS00087">
    <property type="entry name" value="SOD_CU_ZN_1"/>
    <property type="match status" value="1"/>
</dbReference>
<dbReference type="PROSITE" id="PS00332">
    <property type="entry name" value="SOD_CU_ZN_2"/>
    <property type="match status" value="1"/>
</dbReference>
<organism>
    <name type="scientific">Spinacia oleracea</name>
    <name type="common">Spinach</name>
    <dbReference type="NCBI Taxonomy" id="3562"/>
    <lineage>
        <taxon>Eukaryota</taxon>
        <taxon>Viridiplantae</taxon>
        <taxon>Streptophyta</taxon>
        <taxon>Embryophyta</taxon>
        <taxon>Tracheophyta</taxon>
        <taxon>Spermatophyta</taxon>
        <taxon>Magnoliopsida</taxon>
        <taxon>eudicotyledons</taxon>
        <taxon>Gunneridae</taxon>
        <taxon>Pentapetalae</taxon>
        <taxon>Caryophyllales</taxon>
        <taxon>Chenopodiaceae</taxon>
        <taxon>Chenopodioideae</taxon>
        <taxon>Anserineae</taxon>
        <taxon>Spinacia</taxon>
    </lineage>
</organism>